<name>T4G1D_AGEAP</name>
<evidence type="ECO:0000250" key="1"/>
<evidence type="ECO:0000250" key="2">
    <source>
        <dbReference type="UniProtKB" id="P11061"/>
    </source>
</evidence>
<evidence type="ECO:0000269" key="3">
    <source>
    </source>
</evidence>
<evidence type="ECO:0000303" key="4">
    <source>
    </source>
</evidence>
<evidence type="ECO:0000305" key="5"/>
<evidence type="ECO:0000305" key="6">
    <source>
    </source>
</evidence>
<keyword id="KW-0027">Amidation</keyword>
<keyword id="KW-0903">Direct protein sequencing</keyword>
<keyword id="KW-1015">Disulfide bond</keyword>
<keyword id="KW-0872">Ion channel impairing toxin</keyword>
<keyword id="KW-0960">Knottin</keyword>
<keyword id="KW-0528">Neurotoxin</keyword>
<keyword id="KW-0638">Presynaptic neurotoxin</keyword>
<keyword id="KW-0964">Secreted</keyword>
<keyword id="KW-0800">Toxin</keyword>
<keyword id="KW-0738">Voltage-gated sodium channel impairing toxin</keyword>
<organism>
    <name type="scientific">Agelenopsis aperta</name>
    <name type="common">North American funnel-web spider</name>
    <name type="synonym">Agelenopsis gertschi</name>
    <dbReference type="NCBI Taxonomy" id="6908"/>
    <lineage>
        <taxon>Eukaryota</taxon>
        <taxon>Metazoa</taxon>
        <taxon>Ecdysozoa</taxon>
        <taxon>Arthropoda</taxon>
        <taxon>Chelicerata</taxon>
        <taxon>Arachnida</taxon>
        <taxon>Araneae</taxon>
        <taxon>Araneomorphae</taxon>
        <taxon>Entelegynae</taxon>
        <taxon>Agelenidae</taxon>
        <taxon>Agelenopsis</taxon>
    </lineage>
</organism>
<comment type="function">
    <text evidence="3">Insecticidal neurotoxin that induces an irreversible spastic paralysis when injected into insects. Modifies presynaptic voltage-gated sodium channels (Nav), causing them to open at the normal resting potential of the nerve. This leads to spontaneous release of neurotransmitter and repetitive action potentials in motor neurons.</text>
</comment>
<comment type="subcellular location">
    <subcellularLocation>
        <location evidence="3">Secreted</location>
    </subcellularLocation>
</comment>
<comment type="tissue specificity">
    <text evidence="6">Expressed by the venom gland.</text>
</comment>
<comment type="domain">
    <text evidence="1">The presence of a 'disulfide through disulfide knot' structurally defines this protein as a knottin.</text>
</comment>
<comment type="toxic dose">
    <text evidence="3">LD(50) is 40 +-9 mg/kg into third stadium larvae of M.sexta.</text>
</comment>
<comment type="similarity">
    <text evidence="5">Belongs to the neurotoxin 07 (Beta/delta-agtx) family. 03 (aga-4) subfamily. Aga sub-subfamily.</text>
</comment>
<proteinExistence type="evidence at protein level"/>
<sequence length="37" mass="4208">ACVGENQQCADWAGPHCCDGYYCTCRYFPKCICRNNN</sequence>
<accession>P11060</accession>
<feature type="peptide" id="PRO_0000044958" description="Mu-agatoxin-Aa1d" evidence="3">
    <location>
        <begin position="1"/>
        <end position="37"/>
    </location>
</feature>
<feature type="modified residue" description="Asparagine amide" evidence="3">
    <location>
        <position position="37"/>
    </location>
</feature>
<feature type="disulfide bond" evidence="2">
    <location>
        <begin position="2"/>
        <end position="18"/>
    </location>
</feature>
<feature type="disulfide bond" evidence="2">
    <location>
        <begin position="9"/>
        <end position="23"/>
    </location>
</feature>
<feature type="disulfide bond" evidence="2">
    <location>
        <begin position="17"/>
        <end position="33"/>
    </location>
</feature>
<feature type="disulfide bond" evidence="2">
    <location>
        <begin position="25"/>
        <end position="31"/>
    </location>
</feature>
<reference key="1">
    <citation type="journal article" date="1989" name="J. Biol. Chem.">
        <title>Purification and characterization of two classes of neurotoxins from the funnel web spider, Agelenopsis aperta.</title>
        <authorList>
            <person name="Skinner W.S."/>
            <person name="Adams M.E."/>
            <person name="Quistad G.B."/>
            <person name="Kataoka H."/>
            <person name="Cesarin B.J."/>
            <person name="Enderlin F.E."/>
            <person name="Schooley D.A."/>
        </authorList>
    </citation>
    <scope>PROTEIN SEQUENCE</scope>
    <scope>AMIDATION AT ASN-37</scope>
    <scope>FUNCTION</scope>
    <scope>SUBCELLULAR LOCATION</scope>
    <scope>TOXIC DOSE</scope>
    <source>
        <tissue>Venom</tissue>
    </source>
</reference>
<reference key="2">
    <citation type="journal article" date="1996" name="Biochemistry">
        <title>Three-dimensional structure analysis of mu-agatoxins: further evidence for common motifs among neurotoxins with diverse ion channel specificities.</title>
        <authorList>
            <person name="Omecinsky D.O."/>
            <person name="Holub K.E."/>
            <person name="Adams M.E."/>
            <person name="Reily M.D."/>
        </authorList>
    </citation>
    <scope>3D-STRUCTURE MODELING</scope>
</reference>
<reference key="3">
    <citation type="journal article" date="2004" name="Toxicon">
        <title>Agatoxins: ion channel specific toxins from the American funnel web spider, Agelenopsis aperta.</title>
        <authorList>
            <person name="Adams M.E."/>
        </authorList>
    </citation>
    <scope>REVIEW</scope>
</reference>
<protein>
    <recommendedName>
        <fullName evidence="5">Mu-agatoxin-Aa1d</fullName>
        <shortName evidence="5">Mu-AGTX-Aa1d</shortName>
    </recommendedName>
    <alternativeName>
        <fullName evidence="4">Mu-agatoxin IV</fullName>
        <shortName evidence="4">Mu-Aga IV</shortName>
    </alternativeName>
    <alternativeName>
        <fullName evidence="5">Mu-agatoxin-4</fullName>
    </alternativeName>
</protein>
<dbReference type="PIR" id="D32038">
    <property type="entry name" value="D32038"/>
</dbReference>
<dbReference type="SMR" id="P11060"/>
<dbReference type="ArachnoServer" id="AS000381">
    <property type="toxin name" value="mu-agatoxin-Aa1d"/>
</dbReference>
<dbReference type="GO" id="GO:0005576">
    <property type="term" value="C:extracellular region"/>
    <property type="evidence" value="ECO:0007669"/>
    <property type="project" value="UniProtKB-SubCell"/>
</dbReference>
<dbReference type="GO" id="GO:0044231">
    <property type="term" value="C:host cell presynaptic membrane"/>
    <property type="evidence" value="ECO:0007669"/>
    <property type="project" value="UniProtKB-KW"/>
</dbReference>
<dbReference type="GO" id="GO:0017080">
    <property type="term" value="F:sodium channel regulator activity"/>
    <property type="evidence" value="ECO:0007669"/>
    <property type="project" value="UniProtKB-KW"/>
</dbReference>
<dbReference type="GO" id="GO:0090729">
    <property type="term" value="F:toxin activity"/>
    <property type="evidence" value="ECO:0007669"/>
    <property type="project" value="UniProtKB-KW"/>
</dbReference>
<dbReference type="InterPro" id="IPR016328">
    <property type="entry name" value="Beta/delta-agatoxin_fam"/>
</dbReference>
<dbReference type="Pfam" id="PF05980">
    <property type="entry name" value="Toxin_7"/>
    <property type="match status" value="1"/>
</dbReference>
<dbReference type="PIRSF" id="PIRSF001882">
    <property type="entry name" value="Curtatoxin"/>
    <property type="match status" value="1"/>
</dbReference>
<dbReference type="SUPFAM" id="SSF57059">
    <property type="entry name" value="omega toxin-like"/>
    <property type="match status" value="1"/>
</dbReference>
<dbReference type="PROSITE" id="PS60015">
    <property type="entry name" value="MU_AGATOXIN"/>
    <property type="match status" value="1"/>
</dbReference>